<protein>
    <recommendedName>
        <fullName>Tubulin gamma chain</fullName>
    </recommendedName>
    <alternativeName>
        <fullName>Gamma-tubulin</fullName>
    </alternativeName>
</protein>
<feature type="chain" id="PRO_0000048478" description="Tubulin gamma chain">
    <location>
        <begin position="1"/>
        <end position="478"/>
    </location>
</feature>
<feature type="region of interest" description="Disordered" evidence="2">
    <location>
        <begin position="451"/>
        <end position="478"/>
    </location>
</feature>
<feature type="compositionally biased region" description="Polar residues" evidence="2">
    <location>
        <begin position="459"/>
        <end position="468"/>
    </location>
</feature>
<feature type="binding site" evidence="1">
    <location>
        <begin position="141"/>
        <end position="147"/>
    </location>
    <ligand>
        <name>GTP</name>
        <dbReference type="ChEBI" id="CHEBI:37565"/>
    </ligand>
</feature>
<reference key="1">
    <citation type="journal article" date="1997" name="Eur. J. Cell Biol.">
        <title>Unusual distribution of gamma-tubulin in the giant fresh water amoeba Reticulomyxa filosa.</title>
        <authorList>
            <person name="Kube-Granderath E."/>
            <person name="Schliwa M."/>
        </authorList>
    </citation>
    <scope>NUCLEOTIDE SEQUENCE [MRNA]</scope>
</reference>
<organism>
    <name type="scientific">Reticulomyxa filosa</name>
    <dbReference type="NCBI Taxonomy" id="46433"/>
    <lineage>
        <taxon>Eukaryota</taxon>
        <taxon>Sar</taxon>
        <taxon>Rhizaria</taxon>
        <taxon>Retaria</taxon>
        <taxon>Foraminifera</taxon>
        <taxon>Monothalamids</taxon>
        <taxon>Reticulomyxidae</taxon>
        <taxon>Reticulomyxa</taxon>
    </lineage>
</organism>
<evidence type="ECO:0000255" key="1"/>
<evidence type="ECO:0000256" key="2">
    <source>
        <dbReference type="SAM" id="MobiDB-lite"/>
    </source>
</evidence>
<evidence type="ECO:0000305" key="3"/>
<proteinExistence type="evidence at transcript level"/>
<dbReference type="EMBL" id="X97250">
    <property type="protein sequence ID" value="CAA65885.1"/>
    <property type="molecule type" value="mRNA"/>
</dbReference>
<dbReference type="SMR" id="P54405"/>
<dbReference type="GO" id="GO:0005813">
    <property type="term" value="C:centrosome"/>
    <property type="evidence" value="ECO:0007669"/>
    <property type="project" value="UniProtKB-SubCell"/>
</dbReference>
<dbReference type="GO" id="GO:0005737">
    <property type="term" value="C:cytoplasm"/>
    <property type="evidence" value="ECO:0007669"/>
    <property type="project" value="UniProtKB-KW"/>
</dbReference>
<dbReference type="GO" id="GO:0000930">
    <property type="term" value="C:gamma-tubulin complex"/>
    <property type="evidence" value="ECO:0007669"/>
    <property type="project" value="InterPro"/>
</dbReference>
<dbReference type="GO" id="GO:0005874">
    <property type="term" value="C:microtubule"/>
    <property type="evidence" value="ECO:0007669"/>
    <property type="project" value="UniProtKB-KW"/>
</dbReference>
<dbReference type="GO" id="GO:0005525">
    <property type="term" value="F:GTP binding"/>
    <property type="evidence" value="ECO:0007669"/>
    <property type="project" value="UniProtKB-KW"/>
</dbReference>
<dbReference type="GO" id="GO:0031122">
    <property type="term" value="P:cytoplasmic microtubule organization"/>
    <property type="evidence" value="ECO:0007669"/>
    <property type="project" value="InterPro"/>
</dbReference>
<dbReference type="GO" id="GO:0007020">
    <property type="term" value="P:microtubule nucleation"/>
    <property type="evidence" value="ECO:0007669"/>
    <property type="project" value="InterPro"/>
</dbReference>
<dbReference type="CDD" id="cd02188">
    <property type="entry name" value="gamma_tubulin"/>
    <property type="match status" value="1"/>
</dbReference>
<dbReference type="FunFam" id="1.10.287.600:FF:000004">
    <property type="entry name" value="Tubulin gamma chain"/>
    <property type="match status" value="1"/>
</dbReference>
<dbReference type="FunFam" id="3.40.50.1440:FF:000049">
    <property type="entry name" value="Tubulin gamma chain"/>
    <property type="match status" value="1"/>
</dbReference>
<dbReference type="Gene3D" id="1.10.287.600">
    <property type="entry name" value="Helix hairpin bin"/>
    <property type="match status" value="1"/>
</dbReference>
<dbReference type="Gene3D" id="3.30.1330.20">
    <property type="entry name" value="Tubulin/FtsZ, C-terminal domain"/>
    <property type="match status" value="1"/>
</dbReference>
<dbReference type="Gene3D" id="3.40.50.1440">
    <property type="entry name" value="Tubulin/FtsZ, GTPase domain"/>
    <property type="match status" value="1"/>
</dbReference>
<dbReference type="InterPro" id="IPR002454">
    <property type="entry name" value="Gamma_tubulin"/>
</dbReference>
<dbReference type="InterPro" id="IPR008280">
    <property type="entry name" value="Tub_FtsZ_C"/>
</dbReference>
<dbReference type="InterPro" id="IPR000217">
    <property type="entry name" value="Tubulin"/>
</dbReference>
<dbReference type="InterPro" id="IPR037103">
    <property type="entry name" value="Tubulin/FtsZ-like_C"/>
</dbReference>
<dbReference type="InterPro" id="IPR018316">
    <property type="entry name" value="Tubulin/FtsZ_2-layer-sand-dom"/>
</dbReference>
<dbReference type="InterPro" id="IPR036525">
    <property type="entry name" value="Tubulin/FtsZ_GTPase_sf"/>
</dbReference>
<dbReference type="InterPro" id="IPR023123">
    <property type="entry name" value="Tubulin_C"/>
</dbReference>
<dbReference type="InterPro" id="IPR017975">
    <property type="entry name" value="Tubulin_CS"/>
</dbReference>
<dbReference type="InterPro" id="IPR003008">
    <property type="entry name" value="Tubulin_FtsZ_GTPase"/>
</dbReference>
<dbReference type="PANTHER" id="PTHR11588">
    <property type="entry name" value="TUBULIN"/>
    <property type="match status" value="1"/>
</dbReference>
<dbReference type="Pfam" id="PF00091">
    <property type="entry name" value="Tubulin"/>
    <property type="match status" value="1"/>
</dbReference>
<dbReference type="Pfam" id="PF03953">
    <property type="entry name" value="Tubulin_C"/>
    <property type="match status" value="1"/>
</dbReference>
<dbReference type="PRINTS" id="PR01164">
    <property type="entry name" value="GAMMATUBULIN"/>
</dbReference>
<dbReference type="PRINTS" id="PR01161">
    <property type="entry name" value="TUBULIN"/>
</dbReference>
<dbReference type="SMART" id="SM00864">
    <property type="entry name" value="Tubulin"/>
    <property type="match status" value="1"/>
</dbReference>
<dbReference type="SMART" id="SM00865">
    <property type="entry name" value="Tubulin_C"/>
    <property type="match status" value="1"/>
</dbReference>
<dbReference type="SUPFAM" id="SSF55307">
    <property type="entry name" value="Tubulin C-terminal domain-like"/>
    <property type="match status" value="1"/>
</dbReference>
<dbReference type="SUPFAM" id="SSF52490">
    <property type="entry name" value="Tubulin nucleotide-binding domain-like"/>
    <property type="match status" value="1"/>
</dbReference>
<dbReference type="PROSITE" id="PS00227">
    <property type="entry name" value="TUBULIN"/>
    <property type="match status" value="1"/>
</dbReference>
<name>TBG_RETFI</name>
<sequence length="478" mass="53559">MPREIITLQVGQCGNQIGTEFWGRLIAEHGIGPDGIVKEFATEGTDRKDVFFYQADDQHYIPRALLIDLEPRVINSLQESEFKNLWNPENVYIDSQGGGAGNNWAVGYTHATEKYEHIMDMIDREDNSDSLEGFVLTHSIAGGTGSGFGSHMLEQLTDRYPKKIIQTYSVFPNDSERSSVVVHPYNSVLALKRLILNADAVVVIDNTSLHRIADERLQLDFASFKETNSIISTVMAASTTTLRYPGYMNNDLVGLIASLVPTPRAHFLMTSFTPLVIKGAQRRIQKTSVLDVMRRLLQPKNIMVSCGTKKGVYVSILDIIRGDVDPTDIHKSLQRIREKKIVNFIPWGPASIQVALSKQSPYANVPYRVSGCMMANHSNLGNLFARIIRTYDILRKRNAFLNVYKETPVFSENLDEFEDAKETITNLIEEYKAIQTSDYINWGMKQQQSQISQKESSSLANENGNGANNKPGKSAMAL</sequence>
<accession>P54405</accession>
<keyword id="KW-0963">Cytoplasm</keyword>
<keyword id="KW-0206">Cytoskeleton</keyword>
<keyword id="KW-0342">GTP-binding</keyword>
<keyword id="KW-0493">Microtubule</keyword>
<keyword id="KW-0547">Nucleotide-binding</keyword>
<comment type="function">
    <text>Tubulin is the major constituent of microtubules. The gamma chain is found at microtubule organizing centers (MTOC) such as the spindle poles or the centrosome, suggesting that it is involved in the minus-end nucleation of microtubule assembly.</text>
</comment>
<comment type="subcellular location">
    <subcellularLocation>
        <location evidence="3">Cytoplasm</location>
        <location evidence="3">Cytoskeleton</location>
        <location evidence="3">Microtubule organizing center</location>
        <location evidence="3">Centrosome</location>
    </subcellularLocation>
</comment>
<comment type="similarity">
    <text evidence="3">Belongs to the tubulin family.</text>
</comment>